<feature type="chain" id="PRO_0000257671" description="Biosynthetic peptidoglycan transglycosylase">
    <location>
        <begin position="1"/>
        <end position="239"/>
    </location>
</feature>
<feature type="transmembrane region" description="Helical" evidence="1">
    <location>
        <begin position="29"/>
        <end position="49"/>
    </location>
</feature>
<gene>
    <name evidence="1" type="primary">mtgA</name>
    <name type="ordered locus">Jann_0276</name>
</gene>
<accession>Q28VR9</accession>
<protein>
    <recommendedName>
        <fullName evidence="1">Biosynthetic peptidoglycan transglycosylase</fullName>
        <ecNumber evidence="1">2.4.99.28</ecNumber>
    </recommendedName>
    <alternativeName>
        <fullName evidence="1">Glycan polymerase</fullName>
    </alternativeName>
    <alternativeName>
        <fullName evidence="1">Peptidoglycan glycosyltransferase MtgA</fullName>
        <shortName evidence="1">PGT</shortName>
    </alternativeName>
</protein>
<evidence type="ECO:0000255" key="1">
    <source>
        <dbReference type="HAMAP-Rule" id="MF_00766"/>
    </source>
</evidence>
<sequence length="239" mass="26160">MAKRARKSKKNVSRARLLAQAMRRWLLRGMFGLGALMLVWIVAYAVVPVPTTIYMQQERARLGGIERDWVPMDQIAPVLARSVVAAEDANFCLHWGFDMTAIRDAIADGAARGGSTISQQTVKNAFLWHGRSWVRKALEAAITPVMELVWPKRRVLEVYLNVAEFAPGVFGAEAGAQHHFGVSAADLTARQASLMAAVLPNPQRRDAGSPSDLVNRRARSIADGAALIRADGRADCFAN</sequence>
<keyword id="KW-0997">Cell inner membrane</keyword>
<keyword id="KW-1003">Cell membrane</keyword>
<keyword id="KW-0133">Cell shape</keyword>
<keyword id="KW-0961">Cell wall biogenesis/degradation</keyword>
<keyword id="KW-0328">Glycosyltransferase</keyword>
<keyword id="KW-0472">Membrane</keyword>
<keyword id="KW-0573">Peptidoglycan synthesis</keyword>
<keyword id="KW-1185">Reference proteome</keyword>
<keyword id="KW-0808">Transferase</keyword>
<keyword id="KW-0812">Transmembrane</keyword>
<keyword id="KW-1133">Transmembrane helix</keyword>
<reference key="1">
    <citation type="submission" date="2006-02" db="EMBL/GenBank/DDBJ databases">
        <title>Complete sequence of chromosome of Jannaschia sp. CCS1.</title>
        <authorList>
            <consortium name="US DOE Joint Genome Institute"/>
            <person name="Copeland A."/>
            <person name="Lucas S."/>
            <person name="Lapidus A."/>
            <person name="Barry K."/>
            <person name="Detter J.C."/>
            <person name="Glavina del Rio T."/>
            <person name="Hammon N."/>
            <person name="Israni S."/>
            <person name="Pitluck S."/>
            <person name="Brettin T."/>
            <person name="Bruce D."/>
            <person name="Han C."/>
            <person name="Tapia R."/>
            <person name="Gilna P."/>
            <person name="Chertkov O."/>
            <person name="Saunders E."/>
            <person name="Schmutz J."/>
            <person name="Larimer F."/>
            <person name="Land M."/>
            <person name="Kyrpides N."/>
            <person name="Lykidis A."/>
            <person name="Moran M.A."/>
            <person name="Belas R."/>
            <person name="Ye W."/>
            <person name="Buchan A."/>
            <person name="Gonzalez J.M."/>
            <person name="Schell M.A."/>
            <person name="Richardson P."/>
        </authorList>
    </citation>
    <scope>NUCLEOTIDE SEQUENCE [LARGE SCALE GENOMIC DNA]</scope>
    <source>
        <strain>CCS1</strain>
    </source>
</reference>
<organism>
    <name type="scientific">Jannaschia sp. (strain CCS1)</name>
    <dbReference type="NCBI Taxonomy" id="290400"/>
    <lineage>
        <taxon>Bacteria</taxon>
        <taxon>Pseudomonadati</taxon>
        <taxon>Pseudomonadota</taxon>
        <taxon>Alphaproteobacteria</taxon>
        <taxon>Rhodobacterales</taxon>
        <taxon>Roseobacteraceae</taxon>
        <taxon>Jannaschia</taxon>
    </lineage>
</organism>
<name>MTGA_JANSC</name>
<dbReference type="EC" id="2.4.99.28" evidence="1"/>
<dbReference type="EMBL" id="CP000264">
    <property type="protein sequence ID" value="ABD53193.1"/>
    <property type="molecule type" value="Genomic_DNA"/>
</dbReference>
<dbReference type="RefSeq" id="WP_011453402.1">
    <property type="nucleotide sequence ID" value="NC_007802.1"/>
</dbReference>
<dbReference type="SMR" id="Q28VR9"/>
<dbReference type="STRING" id="290400.Jann_0276"/>
<dbReference type="CAZy" id="GT51">
    <property type="family name" value="Glycosyltransferase Family 51"/>
</dbReference>
<dbReference type="KEGG" id="jan:Jann_0276"/>
<dbReference type="eggNOG" id="COG0744">
    <property type="taxonomic scope" value="Bacteria"/>
</dbReference>
<dbReference type="HOGENOM" id="CLU_006354_1_1_5"/>
<dbReference type="OrthoDB" id="9766909at2"/>
<dbReference type="UniPathway" id="UPA00219"/>
<dbReference type="Proteomes" id="UP000008326">
    <property type="component" value="Chromosome"/>
</dbReference>
<dbReference type="GO" id="GO:0009274">
    <property type="term" value="C:peptidoglycan-based cell wall"/>
    <property type="evidence" value="ECO:0007669"/>
    <property type="project" value="InterPro"/>
</dbReference>
<dbReference type="GO" id="GO:0005886">
    <property type="term" value="C:plasma membrane"/>
    <property type="evidence" value="ECO:0007669"/>
    <property type="project" value="UniProtKB-SubCell"/>
</dbReference>
<dbReference type="GO" id="GO:0016763">
    <property type="term" value="F:pentosyltransferase activity"/>
    <property type="evidence" value="ECO:0007669"/>
    <property type="project" value="InterPro"/>
</dbReference>
<dbReference type="GO" id="GO:0008955">
    <property type="term" value="F:peptidoglycan glycosyltransferase activity"/>
    <property type="evidence" value="ECO:0007669"/>
    <property type="project" value="UniProtKB-UniRule"/>
</dbReference>
<dbReference type="GO" id="GO:0071555">
    <property type="term" value="P:cell wall organization"/>
    <property type="evidence" value="ECO:0007669"/>
    <property type="project" value="UniProtKB-KW"/>
</dbReference>
<dbReference type="GO" id="GO:0009252">
    <property type="term" value="P:peptidoglycan biosynthetic process"/>
    <property type="evidence" value="ECO:0007669"/>
    <property type="project" value="UniProtKB-UniRule"/>
</dbReference>
<dbReference type="GO" id="GO:0008360">
    <property type="term" value="P:regulation of cell shape"/>
    <property type="evidence" value="ECO:0007669"/>
    <property type="project" value="UniProtKB-KW"/>
</dbReference>
<dbReference type="Gene3D" id="1.10.3810.10">
    <property type="entry name" value="Biosynthetic peptidoglycan transglycosylase-like"/>
    <property type="match status" value="1"/>
</dbReference>
<dbReference type="HAMAP" id="MF_00766">
    <property type="entry name" value="PGT_MtgA"/>
    <property type="match status" value="1"/>
</dbReference>
<dbReference type="InterPro" id="IPR001264">
    <property type="entry name" value="Glyco_trans_51"/>
</dbReference>
<dbReference type="InterPro" id="IPR023346">
    <property type="entry name" value="Lysozyme-like_dom_sf"/>
</dbReference>
<dbReference type="InterPro" id="IPR036950">
    <property type="entry name" value="PBP_transglycosylase"/>
</dbReference>
<dbReference type="InterPro" id="IPR011812">
    <property type="entry name" value="Pep_trsgly"/>
</dbReference>
<dbReference type="NCBIfam" id="TIGR02070">
    <property type="entry name" value="mono_pep_trsgly"/>
    <property type="match status" value="1"/>
</dbReference>
<dbReference type="PANTHER" id="PTHR30400:SF0">
    <property type="entry name" value="BIOSYNTHETIC PEPTIDOGLYCAN TRANSGLYCOSYLASE"/>
    <property type="match status" value="1"/>
</dbReference>
<dbReference type="PANTHER" id="PTHR30400">
    <property type="entry name" value="MONOFUNCTIONAL BIOSYNTHETIC PEPTIDOGLYCAN TRANSGLYCOSYLASE"/>
    <property type="match status" value="1"/>
</dbReference>
<dbReference type="Pfam" id="PF00912">
    <property type="entry name" value="Transgly"/>
    <property type="match status" value="1"/>
</dbReference>
<dbReference type="SUPFAM" id="SSF53955">
    <property type="entry name" value="Lysozyme-like"/>
    <property type="match status" value="1"/>
</dbReference>
<proteinExistence type="inferred from homology"/>
<comment type="function">
    <text evidence="1">Peptidoglycan polymerase that catalyzes glycan chain elongation from lipid-linked precursors.</text>
</comment>
<comment type="catalytic activity">
    <reaction evidence="1">
        <text>[GlcNAc-(1-&gt;4)-Mur2Ac(oyl-L-Ala-gamma-D-Glu-L-Lys-D-Ala-D-Ala)](n)-di-trans,octa-cis-undecaprenyl diphosphate + beta-D-GlcNAc-(1-&gt;4)-Mur2Ac(oyl-L-Ala-gamma-D-Glu-L-Lys-D-Ala-D-Ala)-di-trans,octa-cis-undecaprenyl diphosphate = [GlcNAc-(1-&gt;4)-Mur2Ac(oyl-L-Ala-gamma-D-Glu-L-Lys-D-Ala-D-Ala)](n+1)-di-trans,octa-cis-undecaprenyl diphosphate + di-trans,octa-cis-undecaprenyl diphosphate + H(+)</text>
        <dbReference type="Rhea" id="RHEA:23708"/>
        <dbReference type="Rhea" id="RHEA-COMP:9602"/>
        <dbReference type="Rhea" id="RHEA-COMP:9603"/>
        <dbReference type="ChEBI" id="CHEBI:15378"/>
        <dbReference type="ChEBI" id="CHEBI:58405"/>
        <dbReference type="ChEBI" id="CHEBI:60033"/>
        <dbReference type="ChEBI" id="CHEBI:78435"/>
        <dbReference type="EC" id="2.4.99.28"/>
    </reaction>
</comment>
<comment type="pathway">
    <text evidence="1">Cell wall biogenesis; peptidoglycan biosynthesis.</text>
</comment>
<comment type="subcellular location">
    <subcellularLocation>
        <location evidence="1">Cell inner membrane</location>
        <topology evidence="1">Single-pass membrane protein</topology>
    </subcellularLocation>
</comment>
<comment type="similarity">
    <text evidence="1">Belongs to the glycosyltransferase 51 family.</text>
</comment>